<name>SMAP2_CHICK</name>
<protein>
    <recommendedName>
        <fullName>Stromal membrane-associated protein 2</fullName>
    </recommendedName>
    <alternativeName>
        <fullName>Stromal membrane-associated protein 1-like</fullName>
    </alternativeName>
</protein>
<feature type="chain" id="PRO_0000235843" description="Stromal membrane-associated protein 2">
    <location>
        <begin position="1"/>
        <end position="428"/>
    </location>
</feature>
<feature type="domain" description="Arf-GAP" evidence="2">
    <location>
        <begin position="13"/>
        <end position="139"/>
    </location>
</feature>
<feature type="zinc finger region" description="C4-type" evidence="2">
    <location>
        <begin position="28"/>
        <end position="51"/>
    </location>
</feature>
<feature type="region of interest" description="Disordered" evidence="3">
    <location>
        <begin position="161"/>
        <end position="182"/>
    </location>
</feature>
<feature type="region of interest" description="Disordered" evidence="3">
    <location>
        <begin position="222"/>
        <end position="258"/>
    </location>
</feature>
<feature type="compositionally biased region" description="Basic and acidic residues" evidence="3">
    <location>
        <begin position="161"/>
        <end position="172"/>
    </location>
</feature>
<organism>
    <name type="scientific">Gallus gallus</name>
    <name type="common">Chicken</name>
    <dbReference type="NCBI Taxonomy" id="9031"/>
    <lineage>
        <taxon>Eukaryota</taxon>
        <taxon>Metazoa</taxon>
        <taxon>Chordata</taxon>
        <taxon>Craniata</taxon>
        <taxon>Vertebrata</taxon>
        <taxon>Euteleostomi</taxon>
        <taxon>Archelosauria</taxon>
        <taxon>Archosauria</taxon>
        <taxon>Dinosauria</taxon>
        <taxon>Saurischia</taxon>
        <taxon>Theropoda</taxon>
        <taxon>Coelurosauria</taxon>
        <taxon>Aves</taxon>
        <taxon>Neognathae</taxon>
        <taxon>Galloanserae</taxon>
        <taxon>Galliformes</taxon>
        <taxon>Phasianidae</taxon>
        <taxon>Phasianinae</taxon>
        <taxon>Gallus</taxon>
    </lineage>
</organism>
<keyword id="KW-0343">GTPase activation</keyword>
<keyword id="KW-0479">Metal-binding</keyword>
<keyword id="KW-1185">Reference proteome</keyword>
<keyword id="KW-0862">Zinc</keyword>
<keyword id="KW-0863">Zinc-finger</keyword>
<proteinExistence type="evidence at transcript level"/>
<dbReference type="EMBL" id="AJ851487">
    <property type="protein sequence ID" value="CAH65121.1"/>
    <property type="molecule type" value="mRNA"/>
</dbReference>
<dbReference type="RefSeq" id="NP_001026073.1">
    <property type="nucleotide sequence ID" value="NM_001030902.2"/>
</dbReference>
<dbReference type="SMR" id="Q5F413"/>
<dbReference type="FunCoup" id="Q5F413">
    <property type="interactions" value="634"/>
</dbReference>
<dbReference type="STRING" id="9031.ENSGALP00000045717"/>
<dbReference type="PaxDb" id="9031-ENSGALP00000039979"/>
<dbReference type="Ensembl" id="ENSGALT00010041419.1">
    <property type="protein sequence ID" value="ENSGALP00010024262.1"/>
    <property type="gene ID" value="ENSGALG00010017167.1"/>
</dbReference>
<dbReference type="GeneID" id="419641"/>
<dbReference type="KEGG" id="gga:419641"/>
<dbReference type="CTD" id="64744"/>
<dbReference type="VEuPathDB" id="HostDB:geneid_419641"/>
<dbReference type="eggNOG" id="KOG0703">
    <property type="taxonomic scope" value="Eukaryota"/>
</dbReference>
<dbReference type="GeneTree" id="ENSGT00940000158387"/>
<dbReference type="InParanoid" id="Q5F413"/>
<dbReference type="OMA" id="MMGYGQS"/>
<dbReference type="OrthoDB" id="10266696at2759"/>
<dbReference type="PhylomeDB" id="Q5F413"/>
<dbReference type="PRO" id="PR:Q5F413"/>
<dbReference type="Proteomes" id="UP000000539">
    <property type="component" value="Chromosome 23"/>
</dbReference>
<dbReference type="Bgee" id="ENSGALG00000029244">
    <property type="expression patterns" value="Expressed in granulocyte and 13 other cell types or tissues"/>
</dbReference>
<dbReference type="GO" id="GO:0005737">
    <property type="term" value="C:cytoplasm"/>
    <property type="evidence" value="ECO:0000318"/>
    <property type="project" value="GO_Central"/>
</dbReference>
<dbReference type="GO" id="GO:0005096">
    <property type="term" value="F:GTPase activator activity"/>
    <property type="evidence" value="ECO:0000318"/>
    <property type="project" value="GO_Central"/>
</dbReference>
<dbReference type="GO" id="GO:0008270">
    <property type="term" value="F:zinc ion binding"/>
    <property type="evidence" value="ECO:0007669"/>
    <property type="project" value="UniProtKB-KW"/>
</dbReference>
<dbReference type="CDD" id="cd08859">
    <property type="entry name" value="ArfGap_SMAP2"/>
    <property type="match status" value="1"/>
</dbReference>
<dbReference type="FunFam" id="1.10.220.150:FF:000009">
    <property type="entry name" value="stromal membrane-associated protein 1 isoform X1"/>
    <property type="match status" value="1"/>
</dbReference>
<dbReference type="Gene3D" id="1.10.220.150">
    <property type="entry name" value="Arf GTPase activating protein"/>
    <property type="match status" value="1"/>
</dbReference>
<dbReference type="InterPro" id="IPR051718">
    <property type="entry name" value="ARF_GTPase-activating"/>
</dbReference>
<dbReference type="InterPro" id="IPR037278">
    <property type="entry name" value="ARFGAP/RecO"/>
</dbReference>
<dbReference type="InterPro" id="IPR001164">
    <property type="entry name" value="ArfGAP_dom"/>
</dbReference>
<dbReference type="InterPro" id="IPR038508">
    <property type="entry name" value="ArfGAP_dom_sf"/>
</dbReference>
<dbReference type="PANTHER" id="PTHR45705">
    <property type="entry name" value="FI20236P1"/>
    <property type="match status" value="1"/>
</dbReference>
<dbReference type="PANTHER" id="PTHR45705:SF4">
    <property type="entry name" value="STROMAL MEMBRANE-ASSOCIATED PROTEIN 2"/>
    <property type="match status" value="1"/>
</dbReference>
<dbReference type="Pfam" id="PF01412">
    <property type="entry name" value="ArfGap"/>
    <property type="match status" value="1"/>
</dbReference>
<dbReference type="PRINTS" id="PR00405">
    <property type="entry name" value="REVINTRACTNG"/>
</dbReference>
<dbReference type="SMART" id="SM00105">
    <property type="entry name" value="ArfGap"/>
    <property type="match status" value="1"/>
</dbReference>
<dbReference type="SUPFAM" id="SSF57863">
    <property type="entry name" value="ArfGap/RecO-like zinc finger"/>
    <property type="match status" value="1"/>
</dbReference>
<dbReference type="PROSITE" id="PS50115">
    <property type="entry name" value="ARFGAP"/>
    <property type="match status" value="1"/>
</dbReference>
<sequence length="428" mass="46315">MTGKSVRDVERYQAVLGSLLSEEENKYCADCQAKGPRWASWNIGVFICIRCAGIHRNLGVHISRVKSVNLDQWTQEQIQCMQEMGNGKANRLYEAFLPENFRRPQTDQAVEGFIRDKYEKKKYMDRSIDINTFRKEKDDKWKKSNEPVSERKLEPIVFEKVKMPQKKEETQQSRKSSPKSTEPVIDLLGLDAPVPSTLTNGRPCSLEKDLDLFASVGLNSDSRKVSGSMPTSGSAGSVPENLNLFPEPGGKGEEAGKKQLSKDSILSLYGSQTPQLPAQGAMFMAPAQMAYPAAAYTSFPGVPPSSSMMGGMMAPSVGVMAQHGAAGMVTPMAIPAGYVGNVQAAVIGVPNGMMAAQQAGYVAGMAAVPQPVYGVQPAQQLQWNITQMTQQMAGMNFYGANGVMGYGQSMGGGGAQGSNQSLSTQLWK</sequence>
<evidence type="ECO:0000250" key="1"/>
<evidence type="ECO:0000255" key="2">
    <source>
        <dbReference type="PROSITE-ProRule" id="PRU00288"/>
    </source>
</evidence>
<evidence type="ECO:0000256" key="3">
    <source>
        <dbReference type="SAM" id="MobiDB-lite"/>
    </source>
</evidence>
<comment type="function">
    <text evidence="1">GTPase activating protein. May play a role in clathrin-dependent retrograde transport from early endosomes to the trans-Golgi network (By similarity).</text>
</comment>
<comment type="subunit">
    <text evidence="1">May interact with clathrin heavy chains.</text>
</comment>
<accession>Q5F413</accession>
<gene>
    <name type="primary">SMAP2</name>
    <name type="synonym">SMAP1L</name>
    <name type="ORF">RCJMB04_3n15</name>
</gene>
<reference key="1">
    <citation type="journal article" date="2005" name="Genome Biol.">
        <title>Full-length cDNAs from chicken bursal lymphocytes to facilitate gene function analysis.</title>
        <authorList>
            <person name="Caldwell R.B."/>
            <person name="Kierzek A.M."/>
            <person name="Arakawa H."/>
            <person name="Bezzubov Y."/>
            <person name="Zaim J."/>
            <person name="Fiedler P."/>
            <person name="Kutter S."/>
            <person name="Blagodatski A."/>
            <person name="Kostovska D."/>
            <person name="Koter M."/>
            <person name="Plachy J."/>
            <person name="Carninci P."/>
            <person name="Hayashizaki Y."/>
            <person name="Buerstedde J.-M."/>
        </authorList>
    </citation>
    <scope>NUCLEOTIDE SEQUENCE [LARGE SCALE MRNA]</scope>
    <source>
        <strain>CB</strain>
        <tissue>Bursa of Fabricius</tissue>
    </source>
</reference>